<feature type="initiator methionine" description="Removed" evidence="1">
    <location>
        <position position="1"/>
    </location>
</feature>
<feature type="chain" id="PRO_0000137038" description="Nucleoside diphosphate kinase">
    <location>
        <begin position="2"/>
        <end position="143"/>
    </location>
</feature>
<feature type="active site" description="Pros-phosphohistidine intermediate" evidence="2">
    <location>
        <position position="117"/>
    </location>
</feature>
<feature type="binding site" evidence="2">
    <location>
        <position position="11"/>
    </location>
    <ligand>
        <name>ATP</name>
        <dbReference type="ChEBI" id="CHEBI:30616"/>
    </ligand>
</feature>
<feature type="binding site" evidence="2">
    <location>
        <position position="59"/>
    </location>
    <ligand>
        <name>ATP</name>
        <dbReference type="ChEBI" id="CHEBI:30616"/>
    </ligand>
</feature>
<feature type="binding site" evidence="2">
    <location>
        <position position="87"/>
    </location>
    <ligand>
        <name>ATP</name>
        <dbReference type="ChEBI" id="CHEBI:30616"/>
    </ligand>
</feature>
<feature type="binding site" evidence="2">
    <location>
        <position position="93"/>
    </location>
    <ligand>
        <name>ATP</name>
        <dbReference type="ChEBI" id="CHEBI:30616"/>
    </ligand>
</feature>
<feature type="binding site" evidence="2">
    <location>
        <position position="104"/>
    </location>
    <ligand>
        <name>ATP</name>
        <dbReference type="ChEBI" id="CHEBI:30616"/>
    </ligand>
</feature>
<feature type="binding site" evidence="2">
    <location>
        <position position="114"/>
    </location>
    <ligand>
        <name>ATP</name>
        <dbReference type="ChEBI" id="CHEBI:30616"/>
    </ligand>
</feature>
<name>NDK_SALPA</name>
<evidence type="ECO:0000250" key="1"/>
<evidence type="ECO:0000255" key="2">
    <source>
        <dbReference type="HAMAP-Rule" id="MF_00451"/>
    </source>
</evidence>
<keyword id="KW-0067">ATP-binding</keyword>
<keyword id="KW-0963">Cytoplasm</keyword>
<keyword id="KW-0418">Kinase</keyword>
<keyword id="KW-0460">Magnesium</keyword>
<keyword id="KW-0479">Metal-binding</keyword>
<keyword id="KW-0546">Nucleotide metabolism</keyword>
<keyword id="KW-0547">Nucleotide-binding</keyword>
<keyword id="KW-0597">Phosphoprotein</keyword>
<keyword id="KW-0808">Transferase</keyword>
<sequence length="143" mass="15522">MAIERTFSIIKPNAVAKNVIGSIFARFEAAGFKIVGTKMLHLTVEQARGFYAEHDGKPFFDGLVEFMTSGPIVVSVLESENAVQRHRDLLGATNPANALAGTLRADYADSLTENGTHGSDSLESAQREIAFFFGEGEVCPRTR</sequence>
<gene>
    <name evidence="2" type="primary">ndk</name>
    <name type="ordered locus">SPA0341</name>
</gene>
<dbReference type="EC" id="2.7.4.6" evidence="2"/>
<dbReference type="EMBL" id="CP000026">
    <property type="protein sequence ID" value="AAV76358.1"/>
    <property type="molecule type" value="Genomic_DNA"/>
</dbReference>
<dbReference type="RefSeq" id="WP_000963846.1">
    <property type="nucleotide sequence ID" value="NC_006511.1"/>
</dbReference>
<dbReference type="SMR" id="Q5PNH7"/>
<dbReference type="KEGG" id="spt:SPA0341"/>
<dbReference type="HOGENOM" id="CLU_060216_8_1_6"/>
<dbReference type="Proteomes" id="UP000008185">
    <property type="component" value="Chromosome"/>
</dbReference>
<dbReference type="GO" id="GO:0005737">
    <property type="term" value="C:cytoplasm"/>
    <property type="evidence" value="ECO:0007669"/>
    <property type="project" value="UniProtKB-SubCell"/>
</dbReference>
<dbReference type="GO" id="GO:0005524">
    <property type="term" value="F:ATP binding"/>
    <property type="evidence" value="ECO:0007669"/>
    <property type="project" value="UniProtKB-UniRule"/>
</dbReference>
<dbReference type="GO" id="GO:0046872">
    <property type="term" value="F:metal ion binding"/>
    <property type="evidence" value="ECO:0007669"/>
    <property type="project" value="UniProtKB-KW"/>
</dbReference>
<dbReference type="GO" id="GO:0004550">
    <property type="term" value="F:nucleoside diphosphate kinase activity"/>
    <property type="evidence" value="ECO:0007669"/>
    <property type="project" value="UniProtKB-UniRule"/>
</dbReference>
<dbReference type="GO" id="GO:0006241">
    <property type="term" value="P:CTP biosynthetic process"/>
    <property type="evidence" value="ECO:0007669"/>
    <property type="project" value="UniProtKB-UniRule"/>
</dbReference>
<dbReference type="GO" id="GO:0006183">
    <property type="term" value="P:GTP biosynthetic process"/>
    <property type="evidence" value="ECO:0007669"/>
    <property type="project" value="UniProtKB-UniRule"/>
</dbReference>
<dbReference type="GO" id="GO:0006228">
    <property type="term" value="P:UTP biosynthetic process"/>
    <property type="evidence" value="ECO:0007669"/>
    <property type="project" value="UniProtKB-UniRule"/>
</dbReference>
<dbReference type="CDD" id="cd04413">
    <property type="entry name" value="NDPk_I"/>
    <property type="match status" value="1"/>
</dbReference>
<dbReference type="FunFam" id="3.30.70.141:FF:000001">
    <property type="entry name" value="Nucleoside diphosphate kinase"/>
    <property type="match status" value="1"/>
</dbReference>
<dbReference type="Gene3D" id="3.30.70.141">
    <property type="entry name" value="Nucleoside diphosphate kinase-like domain"/>
    <property type="match status" value="1"/>
</dbReference>
<dbReference type="HAMAP" id="MF_00451">
    <property type="entry name" value="NDP_kinase"/>
    <property type="match status" value="1"/>
</dbReference>
<dbReference type="InterPro" id="IPR034907">
    <property type="entry name" value="NDK-like_dom"/>
</dbReference>
<dbReference type="InterPro" id="IPR036850">
    <property type="entry name" value="NDK-like_dom_sf"/>
</dbReference>
<dbReference type="InterPro" id="IPR001564">
    <property type="entry name" value="Nucleoside_diP_kinase"/>
</dbReference>
<dbReference type="InterPro" id="IPR023005">
    <property type="entry name" value="Nucleoside_diP_kinase_AS"/>
</dbReference>
<dbReference type="NCBIfam" id="NF001908">
    <property type="entry name" value="PRK00668.1"/>
    <property type="match status" value="1"/>
</dbReference>
<dbReference type="PANTHER" id="PTHR46161">
    <property type="entry name" value="NUCLEOSIDE DIPHOSPHATE KINASE"/>
    <property type="match status" value="1"/>
</dbReference>
<dbReference type="PANTHER" id="PTHR46161:SF3">
    <property type="entry name" value="NUCLEOSIDE DIPHOSPHATE KINASE DDB_G0292928-RELATED"/>
    <property type="match status" value="1"/>
</dbReference>
<dbReference type="Pfam" id="PF00334">
    <property type="entry name" value="NDK"/>
    <property type="match status" value="1"/>
</dbReference>
<dbReference type="PRINTS" id="PR01243">
    <property type="entry name" value="NUCDPKINASE"/>
</dbReference>
<dbReference type="SMART" id="SM00562">
    <property type="entry name" value="NDK"/>
    <property type="match status" value="1"/>
</dbReference>
<dbReference type="SUPFAM" id="SSF54919">
    <property type="entry name" value="Nucleoside diphosphate kinase, NDK"/>
    <property type="match status" value="1"/>
</dbReference>
<dbReference type="PROSITE" id="PS00469">
    <property type="entry name" value="NDPK"/>
    <property type="match status" value="1"/>
</dbReference>
<dbReference type="PROSITE" id="PS51374">
    <property type="entry name" value="NDPK_LIKE"/>
    <property type="match status" value="1"/>
</dbReference>
<proteinExistence type="inferred from homology"/>
<protein>
    <recommendedName>
        <fullName evidence="2">Nucleoside diphosphate kinase</fullName>
        <shortName evidence="2">NDK</shortName>
        <shortName evidence="2">NDP kinase</shortName>
        <ecNumber evidence="2">2.7.4.6</ecNumber>
    </recommendedName>
    <alternativeName>
        <fullName evidence="2">Nucleoside-2-P kinase</fullName>
    </alternativeName>
</protein>
<comment type="function">
    <text evidence="2">Major role in the synthesis of nucleoside triphosphates other than ATP. The ATP gamma phosphate is transferred to the NDP beta phosphate via a ping-pong mechanism, using a phosphorylated active-site intermediate.</text>
</comment>
<comment type="catalytic activity">
    <reaction evidence="2">
        <text>a 2'-deoxyribonucleoside 5'-diphosphate + ATP = a 2'-deoxyribonucleoside 5'-triphosphate + ADP</text>
        <dbReference type="Rhea" id="RHEA:44640"/>
        <dbReference type="ChEBI" id="CHEBI:30616"/>
        <dbReference type="ChEBI" id="CHEBI:61560"/>
        <dbReference type="ChEBI" id="CHEBI:73316"/>
        <dbReference type="ChEBI" id="CHEBI:456216"/>
        <dbReference type="EC" id="2.7.4.6"/>
    </reaction>
</comment>
<comment type="catalytic activity">
    <reaction evidence="2">
        <text>a ribonucleoside 5'-diphosphate + ATP = a ribonucleoside 5'-triphosphate + ADP</text>
        <dbReference type="Rhea" id="RHEA:18113"/>
        <dbReference type="ChEBI" id="CHEBI:30616"/>
        <dbReference type="ChEBI" id="CHEBI:57930"/>
        <dbReference type="ChEBI" id="CHEBI:61557"/>
        <dbReference type="ChEBI" id="CHEBI:456216"/>
        <dbReference type="EC" id="2.7.4.6"/>
    </reaction>
</comment>
<comment type="cofactor">
    <cofactor evidence="2">
        <name>Mg(2+)</name>
        <dbReference type="ChEBI" id="CHEBI:18420"/>
    </cofactor>
</comment>
<comment type="subunit">
    <text evidence="2">Homotetramer.</text>
</comment>
<comment type="subcellular location">
    <subcellularLocation>
        <location evidence="2">Cytoplasm</location>
    </subcellularLocation>
</comment>
<comment type="similarity">
    <text evidence="2">Belongs to the NDK family.</text>
</comment>
<reference key="1">
    <citation type="journal article" date="2004" name="Nat. Genet.">
        <title>Comparison of genome degradation in Paratyphi A and Typhi, human-restricted serovars of Salmonella enterica that cause typhoid.</title>
        <authorList>
            <person name="McClelland M."/>
            <person name="Sanderson K.E."/>
            <person name="Clifton S.W."/>
            <person name="Latreille P."/>
            <person name="Porwollik S."/>
            <person name="Sabo A."/>
            <person name="Meyer R."/>
            <person name="Bieri T."/>
            <person name="Ozersky P."/>
            <person name="McLellan M."/>
            <person name="Harkins C.R."/>
            <person name="Wang C."/>
            <person name="Nguyen C."/>
            <person name="Berghoff A."/>
            <person name="Elliott G."/>
            <person name="Kohlberg S."/>
            <person name="Strong C."/>
            <person name="Du F."/>
            <person name="Carter J."/>
            <person name="Kremizki C."/>
            <person name="Layman D."/>
            <person name="Leonard S."/>
            <person name="Sun H."/>
            <person name="Fulton L."/>
            <person name="Nash W."/>
            <person name="Miner T."/>
            <person name="Minx P."/>
            <person name="Delehaunty K."/>
            <person name="Fronick C."/>
            <person name="Magrini V."/>
            <person name="Nhan M."/>
            <person name="Warren W."/>
            <person name="Florea L."/>
            <person name="Spieth J."/>
            <person name="Wilson R.K."/>
        </authorList>
    </citation>
    <scope>NUCLEOTIDE SEQUENCE [LARGE SCALE GENOMIC DNA]</scope>
    <source>
        <strain>ATCC 9150 / SARB42</strain>
    </source>
</reference>
<organism>
    <name type="scientific">Salmonella paratyphi A (strain ATCC 9150 / SARB42)</name>
    <dbReference type="NCBI Taxonomy" id="295319"/>
    <lineage>
        <taxon>Bacteria</taxon>
        <taxon>Pseudomonadati</taxon>
        <taxon>Pseudomonadota</taxon>
        <taxon>Gammaproteobacteria</taxon>
        <taxon>Enterobacterales</taxon>
        <taxon>Enterobacteriaceae</taxon>
        <taxon>Salmonella</taxon>
    </lineage>
</organism>
<accession>Q5PNH7</accession>